<name>Y4614_STRCO</name>
<evidence type="ECO:0000255" key="1">
    <source>
        <dbReference type="HAMAP-Rule" id="MF_00632"/>
    </source>
</evidence>
<evidence type="ECO:0000305" key="2">
    <source>
    </source>
</evidence>
<reference key="1">
    <citation type="journal article" date="2002" name="Nature">
        <title>Complete genome sequence of the model actinomycete Streptomyces coelicolor A3(2).</title>
        <authorList>
            <person name="Bentley S.D."/>
            <person name="Chater K.F."/>
            <person name="Cerdeno-Tarraga A.-M."/>
            <person name="Challis G.L."/>
            <person name="Thomson N.R."/>
            <person name="James K.D."/>
            <person name="Harris D.E."/>
            <person name="Quail M.A."/>
            <person name="Kieser H."/>
            <person name="Harper D."/>
            <person name="Bateman A."/>
            <person name="Brown S."/>
            <person name="Chandra G."/>
            <person name="Chen C.W."/>
            <person name="Collins M."/>
            <person name="Cronin A."/>
            <person name="Fraser A."/>
            <person name="Goble A."/>
            <person name="Hidalgo J."/>
            <person name="Hornsby T."/>
            <person name="Howarth S."/>
            <person name="Huang C.-H."/>
            <person name="Kieser T."/>
            <person name="Larke L."/>
            <person name="Murphy L.D."/>
            <person name="Oliver K."/>
            <person name="O'Neil S."/>
            <person name="Rabbinowitsch E."/>
            <person name="Rajandream M.A."/>
            <person name="Rutherford K.M."/>
            <person name="Rutter S."/>
            <person name="Seeger K."/>
            <person name="Saunders D."/>
            <person name="Sharp S."/>
            <person name="Squares R."/>
            <person name="Squares S."/>
            <person name="Taylor K."/>
            <person name="Warren T."/>
            <person name="Wietzorrek A."/>
            <person name="Woodward J.R."/>
            <person name="Barrell B.G."/>
            <person name="Parkhill J."/>
            <person name="Hopwood D.A."/>
        </authorList>
    </citation>
    <scope>NUCLEOTIDE SEQUENCE [LARGE SCALE GENOMIC DNA]</scope>
    <source>
        <strain>ATCC BAA-471 / A3(2) / M145</strain>
    </source>
</reference>
<reference key="2">
    <citation type="journal article" date="2013" name="J. Proteomics">
        <title>Proteomic survey of the Streptomyces coelicolor nucleoid.</title>
        <authorList>
            <person name="Bradshaw E."/>
            <person name="Saalbach G."/>
            <person name="McArthur M."/>
        </authorList>
    </citation>
    <scope>IDENTIFICATION BY MASS SPECTROMETRY</scope>
    <scope>SUBCELLULAR LOCATION</scope>
    <source>
        <strain>ATCC BAA-471 / A3(2) / M145</strain>
    </source>
</reference>
<accession>Q9F2U7</accession>
<feature type="chain" id="PRO_0000106202" description="Nucleotide-binding protein SCO4614">
    <location>
        <begin position="1"/>
        <end position="162"/>
    </location>
</feature>
<gene>
    <name type="ordered locus">SCO4614</name>
    <name type="ORF">SCD39.14c</name>
</gene>
<dbReference type="EMBL" id="AL939120">
    <property type="protein sequence ID" value="CAC08267.1"/>
    <property type="molecule type" value="Genomic_DNA"/>
</dbReference>
<dbReference type="RefSeq" id="NP_628776.1">
    <property type="nucleotide sequence ID" value="NC_003888.3"/>
</dbReference>
<dbReference type="RefSeq" id="WP_003974333.1">
    <property type="nucleotide sequence ID" value="NZ_VNID01000028.1"/>
</dbReference>
<dbReference type="SMR" id="Q9F2U7"/>
<dbReference type="FunCoup" id="Q9F2U7">
    <property type="interactions" value="3"/>
</dbReference>
<dbReference type="STRING" id="100226.gene:17762259"/>
<dbReference type="PaxDb" id="100226-SCO4614"/>
<dbReference type="KEGG" id="sco:SCO4614"/>
<dbReference type="PATRIC" id="fig|100226.15.peg.4686"/>
<dbReference type="eggNOG" id="COG1666">
    <property type="taxonomic scope" value="Bacteria"/>
</dbReference>
<dbReference type="HOGENOM" id="CLU_099839_0_0_11"/>
<dbReference type="InParanoid" id="Q9F2U7"/>
<dbReference type="OrthoDB" id="9801447at2"/>
<dbReference type="PhylomeDB" id="Q9F2U7"/>
<dbReference type="Proteomes" id="UP000001973">
    <property type="component" value="Chromosome"/>
</dbReference>
<dbReference type="GO" id="GO:0005829">
    <property type="term" value="C:cytosol"/>
    <property type="evidence" value="ECO:0000318"/>
    <property type="project" value="GO_Central"/>
</dbReference>
<dbReference type="GO" id="GO:0009295">
    <property type="term" value="C:nucleoid"/>
    <property type="evidence" value="ECO:0007669"/>
    <property type="project" value="UniProtKB-SubCell"/>
</dbReference>
<dbReference type="GO" id="GO:0000166">
    <property type="term" value="F:nucleotide binding"/>
    <property type="evidence" value="ECO:0000318"/>
    <property type="project" value="GO_Central"/>
</dbReference>
<dbReference type="CDD" id="cd11740">
    <property type="entry name" value="YajQ_like"/>
    <property type="match status" value="1"/>
</dbReference>
<dbReference type="FunFam" id="3.30.70.860:FF:000004">
    <property type="entry name" value="UPF0234 protein AWC22_11905"/>
    <property type="match status" value="1"/>
</dbReference>
<dbReference type="FunFam" id="3.30.70.990:FF:000003">
    <property type="entry name" value="UPF0234 protein MIP_06774"/>
    <property type="match status" value="1"/>
</dbReference>
<dbReference type="Gene3D" id="3.30.70.860">
    <property type="match status" value="1"/>
</dbReference>
<dbReference type="Gene3D" id="3.30.70.990">
    <property type="entry name" value="YajQ-like, domain 2"/>
    <property type="match status" value="1"/>
</dbReference>
<dbReference type="HAMAP" id="MF_00632">
    <property type="entry name" value="YajQ"/>
    <property type="match status" value="1"/>
</dbReference>
<dbReference type="InterPro" id="IPR007551">
    <property type="entry name" value="DUF520"/>
</dbReference>
<dbReference type="InterPro" id="IPR035571">
    <property type="entry name" value="UPF0234-like_C"/>
</dbReference>
<dbReference type="InterPro" id="IPR035570">
    <property type="entry name" value="UPF0234_N"/>
</dbReference>
<dbReference type="InterPro" id="IPR036183">
    <property type="entry name" value="YajQ-like_sf"/>
</dbReference>
<dbReference type="NCBIfam" id="NF003819">
    <property type="entry name" value="PRK05412.1"/>
    <property type="match status" value="1"/>
</dbReference>
<dbReference type="PANTHER" id="PTHR30476">
    <property type="entry name" value="UPF0234 PROTEIN YAJQ"/>
    <property type="match status" value="1"/>
</dbReference>
<dbReference type="PANTHER" id="PTHR30476:SF0">
    <property type="entry name" value="UPF0234 PROTEIN YAJQ"/>
    <property type="match status" value="1"/>
</dbReference>
<dbReference type="Pfam" id="PF04461">
    <property type="entry name" value="DUF520"/>
    <property type="match status" value="1"/>
</dbReference>
<dbReference type="SUPFAM" id="SSF89963">
    <property type="entry name" value="YajQ-like"/>
    <property type="match status" value="2"/>
</dbReference>
<proteinExistence type="evidence at protein level"/>
<keyword id="KW-0963">Cytoplasm</keyword>
<keyword id="KW-0547">Nucleotide-binding</keyword>
<keyword id="KW-1185">Reference proteome</keyword>
<sequence>MADSSFDIVSKVERQEVDNALNQAAKEISQRYDFKGVGASISWSGEKILMEANSEDRVTAVLDVFQSKLIKRGISLKALDAGEPQLSGKEYKIFASIEEGISQENAKKVAKLIRDEGPKGVKAQVQGEELRVSSKSRDDLQTVISLLKGQDFDFALQFVNYR</sequence>
<comment type="function">
    <text evidence="1">Nucleotide-binding protein.</text>
</comment>
<comment type="subcellular location">
    <subcellularLocation>
        <location evidence="2">Cytoplasm</location>
        <location evidence="2">Nucleoid</location>
    </subcellularLocation>
</comment>
<comment type="similarity">
    <text evidence="1">Belongs to the YajQ family.</text>
</comment>
<organism>
    <name type="scientific">Streptomyces coelicolor (strain ATCC BAA-471 / A3(2) / M145)</name>
    <dbReference type="NCBI Taxonomy" id="100226"/>
    <lineage>
        <taxon>Bacteria</taxon>
        <taxon>Bacillati</taxon>
        <taxon>Actinomycetota</taxon>
        <taxon>Actinomycetes</taxon>
        <taxon>Kitasatosporales</taxon>
        <taxon>Streptomycetaceae</taxon>
        <taxon>Streptomyces</taxon>
        <taxon>Streptomyces albidoflavus group</taxon>
    </lineage>
</organism>
<protein>
    <recommendedName>
        <fullName evidence="1">Nucleotide-binding protein SCO4614</fullName>
    </recommendedName>
</protein>